<accession>Q6R7B4</accession>
<gene>
    <name type="ORF">ORF3</name>
</gene>
<keyword id="KW-0175">Coiled coil</keyword>
<keyword id="KW-1185">Reference proteome</keyword>
<reference key="1">
    <citation type="journal article" date="2005" name="J. Gen. Virol.">
        <title>A novel class of herpesvirus with bivalve hosts.</title>
        <authorList>
            <person name="Davison A.J."/>
            <person name="Trus B.L."/>
            <person name="Cheng N."/>
            <person name="Steven A.C."/>
            <person name="Watson M.S."/>
            <person name="Cunningham C."/>
            <person name="Le Deuff R.M."/>
            <person name="Renault T."/>
        </authorList>
    </citation>
    <scope>NUCLEOTIDE SEQUENCE [LARGE SCALE GENOMIC DNA]</scope>
</reference>
<organism>
    <name type="scientific">Ostreid herpesvirus 1 (isolate France)</name>
    <name type="common">OsHV-1</name>
    <name type="synonym">Pacific oyster herpesvirus</name>
    <dbReference type="NCBI Taxonomy" id="654903"/>
    <lineage>
        <taxon>Viruses</taxon>
        <taxon>Duplodnaviria</taxon>
        <taxon>Heunggongvirae</taxon>
        <taxon>Peploviricota</taxon>
        <taxon>Herviviricetes</taxon>
        <taxon>Herpesvirales</taxon>
        <taxon>Malacoherpesviridae</taxon>
        <taxon>Ostreavirus</taxon>
        <taxon>Ostreavirus ostreidmalaco1</taxon>
        <taxon>Ostreid herpesvirus 1</taxon>
    </lineage>
</organism>
<sequence length="254" mass="29584">MNDEEEMNEEGIAAASNNTTTANDSMWINIMQTEVTRLSSKVTAHEHNVREMFEHRARDAKTAMDDMVSEMNKRMDDLAARIVVLEDEKAELRRINQRLTEKVRDKDMEKAAVNDIGIKNKDRHLPEVDGSQPMITNDVSYHLVEDACRRSARKLYLLVEEVKLYKPDCKFEDYRHISSTPRINTWDSDYDEEEHERQKQTIKTLLEPLIVKIGDTGLVDIRRLYKACIRCDMSSSASVMRKDCFYDRDVANMM</sequence>
<proteinExistence type="predicted"/>
<feature type="chain" id="PRO_0000385039" description="Uncharacterized protein ORF3">
    <location>
        <begin position="1"/>
        <end position="254"/>
    </location>
</feature>
<feature type="coiled-coil region" evidence="1">
    <location>
        <begin position="66"/>
        <end position="111"/>
    </location>
</feature>
<evidence type="ECO:0000255" key="1"/>
<organismHost>
    <name type="scientific">Magallana gigas</name>
    <name type="common">Pacific oyster</name>
    <name type="synonym">Crassostrea gigas</name>
    <dbReference type="NCBI Taxonomy" id="29159"/>
</organismHost>
<organismHost>
    <name type="scientific">Pecten maximus</name>
    <name type="common">King scallop</name>
    <name type="synonym">Pilgrim's clam</name>
    <dbReference type="NCBI Taxonomy" id="6579"/>
</organismHost>
<protein>
    <recommendedName>
        <fullName>Uncharacterized protein ORF3</fullName>
    </recommendedName>
</protein>
<name>Y003_OSHVF</name>
<dbReference type="EMBL" id="AY509253">
    <property type="protein sequence ID" value="AAS00896.1"/>
    <property type="molecule type" value="Genomic_DNA"/>
</dbReference>
<dbReference type="EMBL" id="AY509253">
    <property type="protein sequence ID" value="AAS01001.1"/>
    <property type="molecule type" value="Genomic_DNA"/>
</dbReference>
<dbReference type="RefSeq" id="YP_024549.1">
    <property type="nucleotide sequence ID" value="NC_005881.2"/>
</dbReference>
<dbReference type="RefSeq" id="YP_024654.1">
    <property type="nucleotide sequence ID" value="NC_005881.2"/>
</dbReference>
<dbReference type="SMR" id="Q6R7B4"/>
<dbReference type="KEGG" id="vg:2948161"/>
<dbReference type="KEGG" id="vg:2948173"/>
<dbReference type="Proteomes" id="UP000007021">
    <property type="component" value="Segment"/>
</dbReference>